<comment type="function">
    <text evidence="3 5 8 9 10 11 12 13 14">Non-heme iron-containing dioxygenase that catalyzes the stereo-specific peroxidation of free and esterified polyunsaturated fatty acids generating a spectrum of bioactive lipid mediators (PubMed:8188678). It inserts peroxyl groups at C12 or C15 of arachidonate ((5Z,8Z,11Z,14Z)-eicosatetraenoate) producing both 12-hydroperoxyeicosatetraenoate/12-HPETE and 15-hydroperoxyeicosatetraenoate/15-HPETE (PubMed:8188678). It may then act on 12-HPETE to produce hepoxilins, which may show pro-inflammatory properties (By similarity). Can also peroxidize linoleate ((9Z,12Z)-octadecadienoate) to 13-hydroperoxyoctadecadienoate. May participate in the sequential oxidations of DHA ((4Z,7Z,10Z,13Z,16Z,19Z)-docosahexaenoate) to generate specialized pro-resolving mediators (SPMs)like resolvin D5 ((7S,17S)-diHPDHA) and (7S,14S)-diHPDHA, that actively down-regulate the immune response and have anti-aggregation properties with platelets. Can convert epoxy fatty acids to hydroperoxy-epoxides derivatives followed by an intramolecular nucleophilic substitution leading to the formation of monocyclic endoperoxides (By similarity). Plays an important role during the maintenance of self-tolerance by peroxidizing membrane-bound phosphatidylethanolamine which can then signal the sorting process for clearance of apoptotic cells during inflammation and prevent an autoimmune response (PubMed:22503541). In addition to its role in the immune and inflammatory responses, this enzyme may play a role in epithelial wound healing in the cornea through production of lipoxin A4 (LXA(4)) and docosahexaenoic acid-derived neuroprotectin D1 (NPD1; 10R,17S-HDHA), both lipid autacoids exhibit anti-inflammatory and neuroprotective properties (PubMed:15708862). Furthermore, it may regulate actin polymerization which is crucial for several biological processes such as the phagocytosis of apoptotic cells (PubMed:11278875). It is also implicated in the generation of endogenous ligands for peroxisome proliferator activated receptor (PPAR-gamma), hence modulating macrophage development and function (PubMed:10432118). It may also exert a negative effect on skeletal development by regulating bone mass through this pathway (PubMed:14716014). As well as participates in ER stress and downstream inflammation in adipocytes, pancreatic islets, and liver (PubMed:22215650). Finally, it is also involved in the cellular response to IL13/interleukin-13 (By similarity).</text>
</comment>
<comment type="catalytic activity">
    <reaction evidence="14">
        <text>(5Z,8Z,11Z,14Z)-eicosatetraenoate + O2 = (12S)-hydroperoxy-(5Z,8Z,10E,14Z)-eicosatetraenoate</text>
        <dbReference type="Rhea" id="RHEA:10428"/>
        <dbReference type="ChEBI" id="CHEBI:15379"/>
        <dbReference type="ChEBI" id="CHEBI:32395"/>
        <dbReference type="ChEBI" id="CHEBI:57444"/>
        <dbReference type="EC" id="1.13.11.31"/>
    </reaction>
    <physiologicalReaction direction="left-to-right" evidence="18">
        <dbReference type="Rhea" id="RHEA:10429"/>
    </physiologicalReaction>
</comment>
<comment type="catalytic activity">
    <reaction evidence="14">
        <text>(5Z,8Z,11Z,14Z)-eicosatetraenoate + O2 = (15S)-hydroperoxy-(5Z,8Z,11Z,13E)-eicosatetraenoate</text>
        <dbReference type="Rhea" id="RHEA:16869"/>
        <dbReference type="ChEBI" id="CHEBI:15379"/>
        <dbReference type="ChEBI" id="CHEBI:32395"/>
        <dbReference type="ChEBI" id="CHEBI:57446"/>
        <dbReference type="EC" id="1.13.11.33"/>
    </reaction>
    <physiologicalReaction direction="left-to-right" evidence="18">
        <dbReference type="Rhea" id="RHEA:16870"/>
    </physiologicalReaction>
</comment>
<comment type="catalytic activity">
    <reaction evidence="14">
        <text>(9Z,12Z)-octadecadienoate + O2 = (13S)-hydroperoxy-(9Z,11E)-octadecadienoate</text>
        <dbReference type="Rhea" id="RHEA:22780"/>
        <dbReference type="ChEBI" id="CHEBI:15379"/>
        <dbReference type="ChEBI" id="CHEBI:30245"/>
        <dbReference type="ChEBI" id="CHEBI:57466"/>
        <dbReference type="EC" id="1.13.11.12"/>
    </reaction>
    <physiologicalReaction direction="left-to-right" evidence="18">
        <dbReference type="Rhea" id="RHEA:22781"/>
    </physiologicalReaction>
</comment>
<comment type="catalytic activity">
    <reaction evidence="3">
        <text>(5Z,8Z,11Z,14Z)-eicosatetraenoate + 2 O2 = (14R,15S)-dihydroperoxy-(5Z,8Z,10E,12E)-eicosatetraenoate</text>
        <dbReference type="Rhea" id="RHEA:50928"/>
        <dbReference type="ChEBI" id="CHEBI:15379"/>
        <dbReference type="ChEBI" id="CHEBI:32395"/>
        <dbReference type="ChEBI" id="CHEBI:133900"/>
    </reaction>
    <physiologicalReaction direction="left-to-right" evidence="3">
        <dbReference type="Rhea" id="RHEA:50929"/>
    </physiologicalReaction>
</comment>
<comment type="catalytic activity">
    <reaction evidence="3">
        <text>(5Z,8Z,11Z,14Z)-eicosatetraenoate + 2 O2 = (8S,15S)-dihydroperoxy-(5Z,9E,11Z,13E)-eicosatetraenoate</text>
        <dbReference type="Rhea" id="RHEA:50924"/>
        <dbReference type="ChEBI" id="CHEBI:15379"/>
        <dbReference type="ChEBI" id="CHEBI:32395"/>
        <dbReference type="ChEBI" id="CHEBI:133899"/>
    </reaction>
    <physiologicalReaction direction="left-to-right" evidence="3">
        <dbReference type="Rhea" id="RHEA:50925"/>
    </physiologicalReaction>
</comment>
<comment type="catalytic activity">
    <reaction evidence="3">
        <text>(14S,15R)-epoxy-(5Z,8Z,11Z)-eicosatrienoate + O2 = (8S)-hydroperoxy-(14S,15R)-epoxy-(5Z,9E,11Z)-eicosatrienoate</text>
        <dbReference type="Rhea" id="RHEA:50288"/>
        <dbReference type="ChEBI" id="CHEBI:15379"/>
        <dbReference type="ChEBI" id="CHEBI:131964"/>
        <dbReference type="ChEBI" id="CHEBI:132068"/>
    </reaction>
    <physiologicalReaction direction="left-to-right" evidence="3">
        <dbReference type="Rhea" id="RHEA:50289"/>
    </physiologicalReaction>
</comment>
<comment type="catalytic activity">
    <reaction evidence="3">
        <text>(14S,15R)-epoxy-(5Z,8Z,11Z)-eicosatrienoate + O2 = (12S)-hydroperoxy-(14S,15R)-epoxy-(5Z,8Z,10E)-eicosatrienoate</text>
        <dbReference type="Rhea" id="RHEA:50284"/>
        <dbReference type="ChEBI" id="CHEBI:15379"/>
        <dbReference type="ChEBI" id="CHEBI:131964"/>
        <dbReference type="ChEBI" id="CHEBI:132065"/>
    </reaction>
    <physiologicalReaction direction="left-to-right" evidence="3">
        <dbReference type="Rhea" id="RHEA:50285"/>
    </physiologicalReaction>
</comment>
<comment type="catalytic activity">
    <reaction evidence="3">
        <text>(14R,15S)-epoxy-(5Z,8Z,11Z)-eicosatrienoate + O2 = (5S)-hydroperoxy-(14R,15S)-epoxy-(6E,8Z,11Z)-eicosatrienoate</text>
        <dbReference type="Rhea" id="RHEA:50280"/>
        <dbReference type="ChEBI" id="CHEBI:15379"/>
        <dbReference type="ChEBI" id="CHEBI:131965"/>
        <dbReference type="ChEBI" id="CHEBI:132067"/>
    </reaction>
    <physiologicalReaction direction="left-to-right" evidence="3">
        <dbReference type="Rhea" id="RHEA:50281"/>
    </physiologicalReaction>
</comment>
<comment type="catalytic activity">
    <reaction evidence="3">
        <text>(14R,15S)-epoxy-(5Z,8Z,11Z)-eicosatrienoate + O2 = (12S)-hydroperoxy-(14R,15S)-epoxy-(5Z,8Z,10E)-eicosatrienoate</text>
        <dbReference type="Rhea" id="RHEA:50276"/>
        <dbReference type="ChEBI" id="CHEBI:15379"/>
        <dbReference type="ChEBI" id="CHEBI:131965"/>
        <dbReference type="ChEBI" id="CHEBI:132063"/>
    </reaction>
    <physiologicalReaction direction="left-to-right" evidence="3">
        <dbReference type="Rhea" id="RHEA:50277"/>
    </physiologicalReaction>
</comment>
<comment type="catalytic activity">
    <reaction evidence="3">
        <text>(15R)-hydroperoxy-(5Z,8Z,11Z,13E)-eicosatetraenoate = 15-oxo-(5Z,8Z,11Z,13E)-eicosatetraenoate + H2O</text>
        <dbReference type="Rhea" id="RHEA:50152"/>
        <dbReference type="ChEBI" id="CHEBI:15377"/>
        <dbReference type="ChEBI" id="CHEBI:57410"/>
        <dbReference type="ChEBI" id="CHEBI:82626"/>
    </reaction>
    <physiologicalReaction direction="left-to-right" evidence="3">
        <dbReference type="Rhea" id="RHEA:50153"/>
    </physiologicalReaction>
</comment>
<comment type="catalytic activity">
    <reaction evidence="3">
        <text>(15S)-hydroperoxy-(5Z,8Z,11Z,13E)-eicosatetraenoate = (14S,15S)-epoxy-(5Z,8Z,10E,12E)-eicosatetraenoate + H2O</text>
        <dbReference type="Rhea" id="RHEA:50140"/>
        <dbReference type="ChEBI" id="CHEBI:15377"/>
        <dbReference type="ChEBI" id="CHEBI:57446"/>
        <dbReference type="ChEBI" id="CHEBI:132070"/>
    </reaction>
    <physiologicalReaction direction="left-to-right" evidence="3">
        <dbReference type="Rhea" id="RHEA:50141"/>
    </physiologicalReaction>
</comment>
<comment type="catalytic activity">
    <reaction evidence="5">
        <text>(12S)-hydroperoxy-(5Z,8Z,10E,14Z)-eicosatetraenoate = (8S)-hydroxy-(11S,12S)-epoxy-(5Z,9E,14Z)-eicosatrienoate</text>
        <dbReference type="Rhea" id="RHEA:50216"/>
        <dbReference type="ChEBI" id="CHEBI:57444"/>
        <dbReference type="ChEBI" id="CHEBI:132129"/>
    </reaction>
    <physiologicalReaction direction="left-to-right" evidence="5">
        <dbReference type="Rhea" id="RHEA:50217"/>
    </physiologicalReaction>
</comment>
<comment type="catalytic activity">
    <reaction evidence="4">
        <text>(4Z,7Z,10Z,13Z,16Z)-docosapentaenoate + O2 = 14-hydroperoxy-(4Z,7Z,10Z,12E,16Z)-docosapentaenoate</text>
        <dbReference type="Rhea" id="RHEA:50824"/>
        <dbReference type="ChEBI" id="CHEBI:15379"/>
        <dbReference type="ChEBI" id="CHEBI:77226"/>
        <dbReference type="ChEBI" id="CHEBI:133799"/>
    </reaction>
    <physiologicalReaction direction="left-to-right" evidence="4">
        <dbReference type="Rhea" id="RHEA:50825"/>
    </physiologicalReaction>
</comment>
<comment type="catalytic activity">
    <reaction evidence="4">
        <text>(7Z,10Z,13Z,16Z,19Z)-docosapentaenoate + O2 = 14-hydroperoxy-(7Z,10Z,12E,16Z,19Z)-docosapentaenoate</text>
        <dbReference type="Rhea" id="RHEA:50836"/>
        <dbReference type="ChEBI" id="CHEBI:15379"/>
        <dbReference type="ChEBI" id="CHEBI:77224"/>
        <dbReference type="ChEBI" id="CHEBI:133798"/>
    </reaction>
    <physiologicalReaction direction="left-to-right" evidence="4">
        <dbReference type="Rhea" id="RHEA:50837"/>
    </physiologicalReaction>
</comment>
<comment type="catalytic activity">
    <reaction evidence="3">
        <text>(4Z,7Z,10Z,13Z,16Z,19Z)-docosahexaenoate + O2 = (14S)-hydroperoxy-(4Z,7Z,10Z,12E,16Z,19Z)-docosahexaenoate</text>
        <dbReference type="Rhea" id="RHEA:41332"/>
        <dbReference type="ChEBI" id="CHEBI:15379"/>
        <dbReference type="ChEBI" id="CHEBI:77016"/>
        <dbReference type="ChEBI" id="CHEBI:78048"/>
    </reaction>
    <physiologicalReaction direction="left-to-right" evidence="3">
        <dbReference type="Rhea" id="RHEA:41333"/>
    </physiologicalReaction>
</comment>
<comment type="catalytic activity">
    <reaction evidence="3">
        <text>(4Z,7Z,10Z,13Z,16Z,19Z)-docosahexaenoate + O2 = (17S)-hydroperoxy-(4Z,7Z,10Z,13Z,15E,19Z)-docosahexaenoate</text>
        <dbReference type="Rhea" id="RHEA:50840"/>
        <dbReference type="ChEBI" id="CHEBI:15379"/>
        <dbReference type="ChEBI" id="CHEBI:77016"/>
        <dbReference type="ChEBI" id="CHEBI:133795"/>
    </reaction>
    <physiologicalReaction direction="left-to-right" evidence="3">
        <dbReference type="Rhea" id="RHEA:50841"/>
    </physiologicalReaction>
</comment>
<comment type="catalytic activity">
    <reaction evidence="3">
        <text>(7S)-hydroperoxy-(4Z,8E,10Z,13Z,16Z,19Z)-docosahexaenoate + O2 = (7S,14S)-dihydroperoxy-(4Z,8E,10Z,12E,16Z,19Z)-docosahexaenoate</text>
        <dbReference type="Rhea" id="RHEA:64724"/>
        <dbReference type="ChEBI" id="CHEBI:15379"/>
        <dbReference type="ChEBI" id="CHEBI:156049"/>
        <dbReference type="ChEBI" id="CHEBI:156082"/>
    </reaction>
    <physiologicalReaction direction="left-to-right" evidence="3">
        <dbReference type="Rhea" id="RHEA:64725"/>
    </physiologicalReaction>
</comment>
<comment type="catalytic activity">
    <reaction evidence="3">
        <text>(7S)-hydroperoxy-(4Z,8E,10Z,13Z,16Z,19Z)-docosahexaenoate + O2 = (7S,17S)-dihydroperoxy-(4Z,8E,10Z,13Z,15E,19Z)-docosahexaenoate</text>
        <dbReference type="Rhea" id="RHEA:64728"/>
        <dbReference type="ChEBI" id="CHEBI:15379"/>
        <dbReference type="ChEBI" id="CHEBI:140349"/>
        <dbReference type="ChEBI" id="CHEBI:156049"/>
    </reaction>
    <physiologicalReaction direction="left-to-right" evidence="3">
        <dbReference type="Rhea" id="RHEA:64729"/>
    </physiologicalReaction>
</comment>
<comment type="catalytic activity">
    <reaction evidence="3">
        <text>(4Z,7Z,10Z,13Z,16Z,19Z)-docosahexaenoate + O2 = (11S)-hydroperoxy-(4Z,7Z,9E,13Z,16Z,19Z)-docosahexaenoate</text>
        <dbReference type="Rhea" id="RHEA:64732"/>
        <dbReference type="ChEBI" id="CHEBI:15379"/>
        <dbReference type="ChEBI" id="CHEBI:77016"/>
        <dbReference type="ChEBI" id="CHEBI:156131"/>
    </reaction>
    <physiologicalReaction direction="left-to-right" evidence="3">
        <dbReference type="Rhea" id="RHEA:64733"/>
    </physiologicalReaction>
</comment>
<comment type="catalytic activity">
    <reaction evidence="4">
        <text>N-(5Z,8Z,11Z,14Z)-eicosatetraenoyl-taurine + O2 = N-(12S)-hydroperoxy-(5Z,8Z,10E,14Z)-eicosatetraenoyl-taurine</text>
        <dbReference type="Rhea" id="RHEA:50160"/>
        <dbReference type="ChEBI" id="CHEBI:15379"/>
        <dbReference type="ChEBI" id="CHEBI:132060"/>
        <dbReference type="ChEBI" id="CHEBI:132061"/>
    </reaction>
    <physiologicalReaction direction="left-to-right" evidence="4">
        <dbReference type="Rhea" id="RHEA:50161"/>
    </physiologicalReaction>
</comment>
<comment type="catalytic activity">
    <reaction evidence="4">
        <text>N-(5Z,8Z,11Z,14Z)-eicosatetraenoyl-gamma-aminobutanoate + O2 = N-(12S)-hydroperoxy-(5Z,8Z,10E,14Z)-eicosatetraenoyl-gamma-aminobutanoate</text>
        <dbReference type="Rhea" id="RHEA:50176"/>
        <dbReference type="ChEBI" id="CHEBI:15379"/>
        <dbReference type="ChEBI" id="CHEBI:132072"/>
        <dbReference type="ChEBI" id="CHEBI:132075"/>
    </reaction>
    <physiologicalReaction direction="left-to-right" evidence="4">
        <dbReference type="Rhea" id="RHEA:50177"/>
    </physiologicalReaction>
</comment>
<comment type="catalytic activity">
    <reaction evidence="4">
        <text>N-(5Z,8Z,11Z,14Z)-eicosatetraenoyl-glycine + O2 = N-(12S)-hydroperoxy-(5Z,8Z,10E,14Z)-eicosatetraenoyl-glycine</text>
        <dbReference type="Rhea" id="RHEA:50168"/>
        <dbReference type="ChEBI" id="CHEBI:15379"/>
        <dbReference type="ChEBI" id="CHEBI:59002"/>
        <dbReference type="ChEBI" id="CHEBI:132073"/>
    </reaction>
    <physiologicalReaction direction="left-to-right" evidence="4">
        <dbReference type="Rhea" id="RHEA:50169"/>
    </physiologicalReaction>
</comment>
<comment type="catalytic activity">
    <reaction evidence="4">
        <text>N-(5Z,8Z,11Z,14Z)-eicosatetraenoyl-L-alanine + O2 = N-(12S)-hydroperoxy-(5Z,8Z,10E,14Z)-eicosatetraenoyl-alanine</text>
        <dbReference type="Rhea" id="RHEA:50172"/>
        <dbReference type="ChEBI" id="CHEBI:15379"/>
        <dbReference type="ChEBI" id="CHEBI:132071"/>
        <dbReference type="ChEBI" id="CHEBI:132074"/>
    </reaction>
    <physiologicalReaction direction="left-to-right" evidence="4">
        <dbReference type="Rhea" id="RHEA:50173"/>
    </physiologicalReaction>
</comment>
<comment type="catalytic activity">
    <reaction evidence="2">
        <text>N-(5Z,8Z,11Z,14Z)-eicosatetraenoyl-taurine + O2 = N-(15S)-hydroperoxy-(5Z,8Z,11Z,13E)-eicosatetraenoyl-taurine</text>
        <dbReference type="Rhea" id="RHEA:50156"/>
        <dbReference type="ChEBI" id="CHEBI:15379"/>
        <dbReference type="ChEBI" id="CHEBI:132060"/>
        <dbReference type="ChEBI" id="CHEBI:132062"/>
    </reaction>
    <physiologicalReaction direction="left-to-right" evidence="2">
        <dbReference type="Rhea" id="RHEA:50157"/>
    </physiologicalReaction>
</comment>
<comment type="catalytic activity">
    <reaction evidence="2">
        <text>N-(5Z,8Z,11Z,14Z)-eicosatetraenoyl-gamma-aminobutanoate + O2 = N-(15S)-hydroperoxy-(5Z,8Z,11Z,13E)-eicosatetraenoyl-gamma-aminobutanoate</text>
        <dbReference type="Rhea" id="RHEA:50180"/>
        <dbReference type="ChEBI" id="CHEBI:15379"/>
        <dbReference type="ChEBI" id="CHEBI:132072"/>
        <dbReference type="ChEBI" id="CHEBI:132078"/>
    </reaction>
    <physiologicalReaction direction="left-to-right" evidence="2">
        <dbReference type="Rhea" id="RHEA:50181"/>
    </physiologicalReaction>
</comment>
<comment type="catalytic activity">
    <reaction evidence="2">
        <text>N-(5Z,8Z,11Z,14Z)-eicosatetraenoyl-glycine + O2 = N-(15S)-hydroperoxy-(5Z,8Z,11Z,13E)-eicosatetraenoyl-glycine</text>
        <dbReference type="Rhea" id="RHEA:50188"/>
        <dbReference type="ChEBI" id="CHEBI:15379"/>
        <dbReference type="ChEBI" id="CHEBI:59002"/>
        <dbReference type="ChEBI" id="CHEBI:132076"/>
    </reaction>
    <physiologicalReaction direction="left-to-right" evidence="2">
        <dbReference type="Rhea" id="RHEA:50189"/>
    </physiologicalReaction>
</comment>
<comment type="catalytic activity">
    <reaction evidence="2">
        <text>N-(5Z,8Z,11Z,14Z)-eicosatetraenoyl-L-alanine + O2 = N-(15S)-hydroperoxy-(5Z,8Z,11Z,13E)-eicosatetraenoyl-alanine</text>
        <dbReference type="Rhea" id="RHEA:50184"/>
        <dbReference type="ChEBI" id="CHEBI:15379"/>
        <dbReference type="ChEBI" id="CHEBI:132071"/>
        <dbReference type="ChEBI" id="CHEBI:132077"/>
    </reaction>
    <physiologicalReaction direction="left-to-right" evidence="2">
        <dbReference type="Rhea" id="RHEA:50185"/>
    </physiologicalReaction>
</comment>
<comment type="cofactor">
    <cofactor evidence="4 7">
        <name>Fe cation</name>
        <dbReference type="ChEBI" id="CHEBI:24875"/>
    </cofactor>
    <text evidence="4 7">Binds 1 Fe cation per subunit.</text>
</comment>
<comment type="pathway">
    <text evidence="14">Lipid metabolism; hydroperoxy eicosatetraenoic acid biosynthesis.</text>
</comment>
<comment type="subunit">
    <text evidence="3">Interacts with PEBP1; in response to IL13/interleukin-13, prevents the interaction of PEBP1 with RAF1 to activate the ERK signaling cascade.</text>
</comment>
<comment type="subcellular location">
    <subcellularLocation>
        <location evidence="9">Cytoplasm</location>
        <location evidence="9">Cytosol</location>
    </subcellularLocation>
    <subcellularLocation>
        <location evidence="9">Cell membrane</location>
        <topology evidence="3">Peripheral membrane protein</topology>
    </subcellularLocation>
    <subcellularLocation>
        <location evidence="3">Lipid droplet</location>
    </subcellularLocation>
    <text evidence="9">Predominantly cytosolic; becomes enriched at membranes upon calcium binding (PubMed:11278875). Translocates from the cytosol to the plasma membrane when stimulated by IL13/interleukin-13 and in macrophages binding apoptotic cells (PubMed:11278875).</text>
</comment>
<comment type="tissue specificity">
    <text evidence="11 13 14 15">Found in pituitary and pineal glands as well as leukocytes, kidney, aorta, small intestine and cornea (PubMed:15708862, PubMed:22503541, PubMed:8188678). Also expressed by resident peritoneal macrophages (at protein level) (PubMed:8798642).</text>
</comment>
<comment type="induction">
    <text evidence="12">Up-regulated in response to endoplasmic reticulum stress (at protein level).</text>
</comment>
<comment type="domain">
    <text evidence="1">The PLAT domain can bind calcium ions; this promotes association with membranes.</text>
</comment>
<comment type="disruption phenotype">
    <text evidence="10 12 13 15">Mice are fertile and do not display overt phenotype. However, reduced endoplasmic reticulum stress response to high-fat diet is observed. Aged mice also display systemic autoimmunity, a significant and spontaneous production of several forms of autoantibodies being detected and glomerulonephritis and deposits of complement and immunoglobulins within their glomeruli being observed. They also display reduced bone mass.</text>
</comment>
<comment type="similarity">
    <text evidence="17">Belongs to the lipoxygenase family.</text>
</comment>
<sequence>MGVYRIRVSTGDSVYAGSNNEVYLWLIGQHGEASLGKLFRPCRNSEAEFKVDVSEYLGPLLFVRVQKWHYLKEDAWFCNWISVKGPGDQGSEYTFPCYRWVQGTSILNLPEGTGCTVVEDSQGLFRNHREEELEERRSLYRWGNWKDGTILNVAATSISDLPVDQRFREDKRLEFEASQVLGTMDTVINFPKNTVTCWKSLDDFNYVFKSGHTKMAERVRNSWKEDAFFGYQFLNGANPMVLKRSTCLPARLVFPPGMEKLQAQLDEELKKGTLFEADFFLLDGIKANVILCSQQYLAAPLVMLKLQPDGQLLPIAIQLELPKTGSTPPPIFTPLDPPMDWLLAKCWVRSSDLQLHELQAHLLRGHLVAEVFAVATMRCLPSVHPVFKLLVPHLLYTMEINVRARSDLISERGFFDKVMSTGGGGHLDLLKQAGAFLTYSSLCPPDDLAERGLLDIDTCFYAKDALQLWQVMNRYVVGMFDLYYKTDQAVQDDYELQSWCQEITEIGLQGAQDRGFPTSLQSRAQACHFITMCIFTCTAQHSSIHLGQLDWFYWVPNAPCTMRLPPPKTKDATMEKLMATLPNPNQSTLQINVVWLLGRRQAVMVPLGQHSEEHFPNPEAKAVLKKFREELAALDKEIEIRNKSLDIPYEYLRPSLVENSVAI</sequence>
<name>LOX15_MOUSE</name>
<keyword id="KW-0106">Calcium</keyword>
<keyword id="KW-1003">Cell membrane</keyword>
<keyword id="KW-0963">Cytoplasm</keyword>
<keyword id="KW-0223">Dioxygenase</keyword>
<keyword id="KW-0276">Fatty acid metabolism</keyword>
<keyword id="KW-0408">Iron</keyword>
<keyword id="KW-0551">Lipid droplet</keyword>
<keyword id="KW-0443">Lipid metabolism</keyword>
<keyword id="KW-0446">Lipid-binding</keyword>
<keyword id="KW-0472">Membrane</keyword>
<keyword id="KW-0479">Metal-binding</keyword>
<keyword id="KW-0560">Oxidoreductase</keyword>
<keyword id="KW-1185">Reference proteome</keyword>
<organism>
    <name type="scientific">Mus musculus</name>
    <name type="common">Mouse</name>
    <dbReference type="NCBI Taxonomy" id="10090"/>
    <lineage>
        <taxon>Eukaryota</taxon>
        <taxon>Metazoa</taxon>
        <taxon>Chordata</taxon>
        <taxon>Craniata</taxon>
        <taxon>Vertebrata</taxon>
        <taxon>Euteleostomi</taxon>
        <taxon>Mammalia</taxon>
        <taxon>Eutheria</taxon>
        <taxon>Euarchontoglires</taxon>
        <taxon>Glires</taxon>
        <taxon>Rodentia</taxon>
        <taxon>Myomorpha</taxon>
        <taxon>Muroidea</taxon>
        <taxon>Muridae</taxon>
        <taxon>Murinae</taxon>
        <taxon>Mus</taxon>
        <taxon>Mus</taxon>
    </lineage>
</organism>
<accession>P39654</accession>
<accession>Q4FJY9</accession>
<accession>Q5F2E3</accession>
<accession>Q6PHB2</accession>
<reference key="1">
    <citation type="journal article" date="1994" name="J. Biol. Chem.">
        <title>cDNA cloning, expression, mutagenesis of C-terminal isoleucine, genomic structure, and chromosomal localizations of murine 12-lipoxygenases.</title>
        <authorList>
            <person name="Chen X.-S."/>
            <person name="Kurre U."/>
            <person name="Jenkins N.A."/>
            <person name="Copeland N.G."/>
            <person name="Funk C.D."/>
        </authorList>
    </citation>
    <scope>NUCLEOTIDE SEQUENCE [MRNA]</scope>
    <scope>CATALYTIC ACTIVITY</scope>
    <scope>TISSUE SPECIFICITY</scope>
    <scope>FUNCTION</scope>
    <scope>MUTAGENESIS OF ILE-663</scope>
    <source>
        <strain>C57BL/6J</strain>
        <strain>ICR</strain>
        <tissue>Spleen</tissue>
    </source>
</reference>
<reference key="2">
    <citation type="journal article" date="1995" name="Biochim. Biophys. Acta">
        <title>Cloning and characterization of a murine macrophage lipoxygenase.</title>
        <authorList>
            <person name="Freire-Moar J."/>
            <person name="Alavi-Nassab A."/>
            <person name="Ng M."/>
            <person name="Mulkins M."/>
            <person name="Sigal E."/>
        </authorList>
    </citation>
    <scope>NUCLEOTIDE SEQUENCE [MRNA]</scope>
    <source>
        <tissue>Macrophage</tissue>
    </source>
</reference>
<reference key="3">
    <citation type="journal article" date="2005" name="Science">
        <title>The transcriptional landscape of the mammalian genome.</title>
        <authorList>
            <person name="Carninci P."/>
            <person name="Kasukawa T."/>
            <person name="Katayama S."/>
            <person name="Gough J."/>
            <person name="Frith M.C."/>
            <person name="Maeda N."/>
            <person name="Oyama R."/>
            <person name="Ravasi T."/>
            <person name="Lenhard B."/>
            <person name="Wells C."/>
            <person name="Kodzius R."/>
            <person name="Shimokawa K."/>
            <person name="Bajic V.B."/>
            <person name="Brenner S.E."/>
            <person name="Batalov S."/>
            <person name="Forrest A.R."/>
            <person name="Zavolan M."/>
            <person name="Davis M.J."/>
            <person name="Wilming L.G."/>
            <person name="Aidinis V."/>
            <person name="Allen J.E."/>
            <person name="Ambesi-Impiombato A."/>
            <person name="Apweiler R."/>
            <person name="Aturaliya R.N."/>
            <person name="Bailey T.L."/>
            <person name="Bansal M."/>
            <person name="Baxter L."/>
            <person name="Beisel K.W."/>
            <person name="Bersano T."/>
            <person name="Bono H."/>
            <person name="Chalk A.M."/>
            <person name="Chiu K.P."/>
            <person name="Choudhary V."/>
            <person name="Christoffels A."/>
            <person name="Clutterbuck D.R."/>
            <person name="Crowe M.L."/>
            <person name="Dalla E."/>
            <person name="Dalrymple B.P."/>
            <person name="de Bono B."/>
            <person name="Della Gatta G."/>
            <person name="di Bernardo D."/>
            <person name="Down T."/>
            <person name="Engstrom P."/>
            <person name="Fagiolini M."/>
            <person name="Faulkner G."/>
            <person name="Fletcher C.F."/>
            <person name="Fukushima T."/>
            <person name="Furuno M."/>
            <person name="Futaki S."/>
            <person name="Gariboldi M."/>
            <person name="Georgii-Hemming P."/>
            <person name="Gingeras T.R."/>
            <person name="Gojobori T."/>
            <person name="Green R.E."/>
            <person name="Gustincich S."/>
            <person name="Harbers M."/>
            <person name="Hayashi Y."/>
            <person name="Hensch T.K."/>
            <person name="Hirokawa N."/>
            <person name="Hill D."/>
            <person name="Huminiecki L."/>
            <person name="Iacono M."/>
            <person name="Ikeo K."/>
            <person name="Iwama A."/>
            <person name="Ishikawa T."/>
            <person name="Jakt M."/>
            <person name="Kanapin A."/>
            <person name="Katoh M."/>
            <person name="Kawasawa Y."/>
            <person name="Kelso J."/>
            <person name="Kitamura H."/>
            <person name="Kitano H."/>
            <person name="Kollias G."/>
            <person name="Krishnan S.P."/>
            <person name="Kruger A."/>
            <person name="Kummerfeld S.K."/>
            <person name="Kurochkin I.V."/>
            <person name="Lareau L.F."/>
            <person name="Lazarevic D."/>
            <person name="Lipovich L."/>
            <person name="Liu J."/>
            <person name="Liuni S."/>
            <person name="McWilliam S."/>
            <person name="Madan Babu M."/>
            <person name="Madera M."/>
            <person name="Marchionni L."/>
            <person name="Matsuda H."/>
            <person name="Matsuzawa S."/>
            <person name="Miki H."/>
            <person name="Mignone F."/>
            <person name="Miyake S."/>
            <person name="Morris K."/>
            <person name="Mottagui-Tabar S."/>
            <person name="Mulder N."/>
            <person name="Nakano N."/>
            <person name="Nakauchi H."/>
            <person name="Ng P."/>
            <person name="Nilsson R."/>
            <person name="Nishiguchi S."/>
            <person name="Nishikawa S."/>
            <person name="Nori F."/>
            <person name="Ohara O."/>
            <person name="Okazaki Y."/>
            <person name="Orlando V."/>
            <person name="Pang K.C."/>
            <person name="Pavan W.J."/>
            <person name="Pavesi G."/>
            <person name="Pesole G."/>
            <person name="Petrovsky N."/>
            <person name="Piazza S."/>
            <person name="Reed J."/>
            <person name="Reid J.F."/>
            <person name="Ring B.Z."/>
            <person name="Ringwald M."/>
            <person name="Rost B."/>
            <person name="Ruan Y."/>
            <person name="Salzberg S.L."/>
            <person name="Sandelin A."/>
            <person name="Schneider C."/>
            <person name="Schoenbach C."/>
            <person name="Sekiguchi K."/>
            <person name="Semple C.A."/>
            <person name="Seno S."/>
            <person name="Sessa L."/>
            <person name="Sheng Y."/>
            <person name="Shibata Y."/>
            <person name="Shimada H."/>
            <person name="Shimada K."/>
            <person name="Silva D."/>
            <person name="Sinclair B."/>
            <person name="Sperling S."/>
            <person name="Stupka E."/>
            <person name="Sugiura K."/>
            <person name="Sultana R."/>
            <person name="Takenaka Y."/>
            <person name="Taki K."/>
            <person name="Tammoja K."/>
            <person name="Tan S.L."/>
            <person name="Tang S."/>
            <person name="Taylor M.S."/>
            <person name="Tegner J."/>
            <person name="Teichmann S.A."/>
            <person name="Ueda H.R."/>
            <person name="van Nimwegen E."/>
            <person name="Verardo R."/>
            <person name="Wei C.L."/>
            <person name="Yagi K."/>
            <person name="Yamanishi H."/>
            <person name="Zabarovsky E."/>
            <person name="Zhu S."/>
            <person name="Zimmer A."/>
            <person name="Hide W."/>
            <person name="Bult C."/>
            <person name="Grimmond S.M."/>
            <person name="Teasdale R.D."/>
            <person name="Liu E.T."/>
            <person name="Brusic V."/>
            <person name="Quackenbush J."/>
            <person name="Wahlestedt C."/>
            <person name="Mattick J.S."/>
            <person name="Hume D.A."/>
            <person name="Kai C."/>
            <person name="Sasaki D."/>
            <person name="Tomaru Y."/>
            <person name="Fukuda S."/>
            <person name="Kanamori-Katayama M."/>
            <person name="Suzuki M."/>
            <person name="Aoki J."/>
            <person name="Arakawa T."/>
            <person name="Iida J."/>
            <person name="Imamura K."/>
            <person name="Itoh M."/>
            <person name="Kato T."/>
            <person name="Kawaji H."/>
            <person name="Kawagashira N."/>
            <person name="Kawashima T."/>
            <person name="Kojima M."/>
            <person name="Kondo S."/>
            <person name="Konno H."/>
            <person name="Nakano K."/>
            <person name="Ninomiya N."/>
            <person name="Nishio T."/>
            <person name="Okada M."/>
            <person name="Plessy C."/>
            <person name="Shibata K."/>
            <person name="Shiraki T."/>
            <person name="Suzuki S."/>
            <person name="Tagami M."/>
            <person name="Waki K."/>
            <person name="Watahiki A."/>
            <person name="Okamura-Oho Y."/>
            <person name="Suzuki H."/>
            <person name="Kawai J."/>
            <person name="Hayashizaki Y."/>
        </authorList>
    </citation>
    <scope>NUCLEOTIDE SEQUENCE [LARGE SCALE MRNA]</scope>
    <source>
        <strain>C57BL/6J</strain>
        <tissue>Lung</tissue>
    </source>
</reference>
<reference key="4">
    <citation type="submission" date="2005-07" db="EMBL/GenBank/DDBJ databases">
        <title>Cloning of mouse full open reading frames in Gateway(R) system entry vector (pDONR201).</title>
        <authorList>
            <person name="Ebert L."/>
            <person name="Muenstermann E."/>
            <person name="Schatten R."/>
            <person name="Henze S."/>
            <person name="Bohn E."/>
            <person name="Mollenhauer J."/>
            <person name="Wiemann S."/>
            <person name="Schick M."/>
            <person name="Korn B."/>
        </authorList>
    </citation>
    <scope>NUCLEOTIDE SEQUENCE [LARGE SCALE MRNA]</scope>
</reference>
<reference key="5">
    <citation type="journal article" date="2009" name="PLoS Biol.">
        <title>Lineage-specific biology revealed by a finished genome assembly of the mouse.</title>
        <authorList>
            <person name="Church D.M."/>
            <person name="Goodstadt L."/>
            <person name="Hillier L.W."/>
            <person name="Zody M.C."/>
            <person name="Goldstein S."/>
            <person name="She X."/>
            <person name="Bult C.J."/>
            <person name="Agarwala R."/>
            <person name="Cherry J.L."/>
            <person name="DiCuccio M."/>
            <person name="Hlavina W."/>
            <person name="Kapustin Y."/>
            <person name="Meric P."/>
            <person name="Maglott D."/>
            <person name="Birtle Z."/>
            <person name="Marques A.C."/>
            <person name="Graves T."/>
            <person name="Zhou S."/>
            <person name="Teague B."/>
            <person name="Potamousis K."/>
            <person name="Churas C."/>
            <person name="Place M."/>
            <person name="Herschleb J."/>
            <person name="Runnheim R."/>
            <person name="Forrest D."/>
            <person name="Amos-Landgraf J."/>
            <person name="Schwartz D.C."/>
            <person name="Cheng Z."/>
            <person name="Lindblad-Toh K."/>
            <person name="Eichler E.E."/>
            <person name="Ponting C.P."/>
        </authorList>
    </citation>
    <scope>NUCLEOTIDE SEQUENCE [LARGE SCALE GENOMIC DNA]</scope>
    <source>
        <strain>C57BL/6J</strain>
    </source>
</reference>
<reference key="6">
    <citation type="journal article" date="2004" name="Genome Res.">
        <title>The status, quality, and expansion of the NIH full-length cDNA project: the Mammalian Gene Collection (MGC).</title>
        <authorList>
            <consortium name="The MGC Project Team"/>
        </authorList>
    </citation>
    <scope>NUCLEOTIDE SEQUENCE [LARGE SCALE MRNA]</scope>
    <source>
        <strain>FVB/N</strain>
        <strain>FVB/N-3</strain>
        <tissue>Mammary tumor</tissue>
    </source>
</reference>
<reference key="7">
    <citation type="journal article" date="1996" name="J. Biol. Chem.">
        <title>Disruption of 12/15-lipoxygenase expression in peritoneal macrophages. Enhanced utilization of the 5-lipoxygenase pathway and diminished oxidation of low density lipoprotein.</title>
        <authorList>
            <person name="Sun D."/>
            <person name="Funk C.D."/>
        </authorList>
    </citation>
    <scope>DISRUPTION PHENOTYPE</scope>
    <scope>TISSUE SPECIFICITY</scope>
</reference>
<reference key="8">
    <citation type="journal article" date="1999" name="Nature">
        <title>Interleukin-4-dependent production of PPAR-gamma ligands in macrophages by 12/15-lipoxygenase.</title>
        <authorList>
            <person name="Huang J.T."/>
            <person name="Welch J.S."/>
            <person name="Ricote M."/>
            <person name="Binder C.J."/>
            <person name="Willson T.M."/>
            <person name="Kelly C."/>
            <person name="Witztum J.L."/>
            <person name="Funk C.D."/>
            <person name="Conrad D."/>
            <person name="Glass C.K."/>
        </authorList>
    </citation>
    <scope>FUNCTION IN MACROPHAGE</scope>
</reference>
<reference key="9">
    <citation type="journal article" date="2001" name="J. Biol. Chem.">
        <title>12/15-lipoxygenase translocation enhances site-specific actin polymerization in macrophages phagocytosing apoptotic cells.</title>
        <authorList>
            <person name="Miller Y.I."/>
            <person name="Chang M.K."/>
            <person name="Funk C.D."/>
            <person name="Feramisco J.R."/>
            <person name="Witztum J.L."/>
        </authorList>
    </citation>
    <scope>FUNCTION IN ACTIN REGULATION</scope>
    <scope>SUBCELLULAR LOCATION</scope>
</reference>
<reference key="10">
    <citation type="journal article" date="2004" name="Science">
        <title>Regulation of bone mass in mice by the lipoxygenase gene Alox15.</title>
        <authorList>
            <person name="Klein R.F."/>
            <person name="Allard J."/>
            <person name="Avnur Z."/>
            <person name="Nikolcheva T."/>
            <person name="Rotstein D."/>
            <person name="Carlos A.S."/>
            <person name="Shea M."/>
            <person name="Waters R.V."/>
            <person name="Belknap J.K."/>
            <person name="Peltz G."/>
            <person name="Orwoll E.S."/>
        </authorList>
    </citation>
    <scope>FUNCTION IN BONE DEVELOPMENT</scope>
    <scope>DISRUPTION PHENOTYPE</scope>
</reference>
<reference key="11">
    <citation type="journal article" date="2005" name="J. Biol. Chem.">
        <title>A role for the mouse 12/15-lipoxygenase pathway in promoting epithelial wound healing and host defense.</title>
        <authorList>
            <person name="Gronert K."/>
            <person name="Maheshwari N."/>
            <person name="Khan N."/>
            <person name="Hassan I.R."/>
            <person name="Dunn M."/>
            <person name="Laniado Schwartzman M."/>
        </authorList>
    </citation>
    <scope>FUNCTION IN HEALING</scope>
    <scope>TISSUE SPECIFICITY</scope>
</reference>
<reference key="12">
    <citation type="journal article" date="2010" name="Cell">
        <title>A tissue-specific atlas of mouse protein phosphorylation and expression.</title>
        <authorList>
            <person name="Huttlin E.L."/>
            <person name="Jedrychowski M.P."/>
            <person name="Elias J.E."/>
            <person name="Goswami T."/>
            <person name="Rad R."/>
            <person name="Beausoleil S.A."/>
            <person name="Villen J."/>
            <person name="Haas W."/>
            <person name="Sowa M.E."/>
            <person name="Gygi S.P."/>
        </authorList>
    </citation>
    <scope>IDENTIFICATION BY MASS SPECTROMETRY [LARGE SCALE ANALYSIS]</scope>
    <source>
        <tissue>Lung</tissue>
        <tissue>Spleen</tissue>
    </source>
</reference>
<reference key="13">
    <citation type="journal article" date="2012" name="Am. J. Physiol.">
        <title>12/15-Lipoxygenase signaling in the endoplasmic reticulum stress response.</title>
        <authorList>
            <person name="Cole B.K."/>
            <person name="Kuhn N.S."/>
            <person name="Green-Mitchell S.M."/>
            <person name="Leone K.A."/>
            <person name="Raab R.M."/>
            <person name="Nadler J.L."/>
            <person name="Chakrabarti S.K."/>
        </authorList>
    </citation>
    <scope>FUNCTION IN ER STRESS RESPONSE</scope>
    <scope>DISRUPTION PHENOTYPE</scope>
    <scope>INDUCTION</scope>
</reference>
<reference key="14">
    <citation type="journal article" date="2012" name="Immunity">
        <title>12/15-lipoxygenase orchestrates the clearance of apoptotic cells and maintains immunologic tolerance.</title>
        <authorList>
            <person name="Uderhardt S."/>
            <person name="Herrmann M."/>
            <person name="Oskolkova O.V."/>
            <person name="Aschermann S."/>
            <person name="Bicker W."/>
            <person name="Ipseiz N."/>
            <person name="Sarter K."/>
            <person name="Frey B."/>
            <person name="Rothe T."/>
            <person name="Voll R."/>
            <person name="Nimmerjahn F."/>
            <person name="Bochkov V.N."/>
            <person name="Schett G."/>
            <person name="Kroenke G."/>
        </authorList>
    </citation>
    <scope>FUNCTION IN APOPTOTIC CELL CLEARANCE</scope>
    <scope>DISRUPTION PHENOTYPE</scope>
    <scope>TISSUE SPECIFICITY</scope>
</reference>
<protein>
    <recommendedName>
        <fullName evidence="17">Polyunsaturated fatty acid lipoxygenase ALOX15</fullName>
    </recommendedName>
    <alternativeName>
        <fullName evidence="16">12/15-lipoxygenase</fullName>
        <shortName>12/15-LO</shortName>
    </alternativeName>
    <alternativeName>
        <fullName evidence="5">Arachidonate 12-lipoxygenase, leukocyte-type</fullName>
        <shortName>12-LOX</shortName>
        <shortName evidence="16">L-12LO</shortName>
        <ecNumber evidence="14">1.13.11.31</ecNumber>
    </alternativeName>
    <alternativeName>
        <fullName>Arachidonate 15-lipoxygenase</fullName>
        <shortName>15-LOX</shortName>
        <ecNumber evidence="14">1.13.11.33</ecNumber>
    </alternativeName>
    <alternativeName>
        <fullName evidence="3">Arachidonate omega-6 lipoxygenase</fullName>
    </alternativeName>
    <alternativeName>
        <fullName evidence="5">Hepoxilin A3 synthase Alox15</fullName>
        <ecNumber evidence="5">1.13.11.-</ecNumber>
    </alternativeName>
    <alternativeName>
        <fullName>Linoleate 13S-lipoxygenase</fullName>
        <ecNumber evidence="14">1.13.11.12</ecNumber>
    </alternativeName>
</protein>
<gene>
    <name evidence="19" type="primary">Alox15</name>
    <name type="synonym">Alox12l</name>
</gene>
<evidence type="ECO:0000250" key="1"/>
<evidence type="ECO:0000250" key="2">
    <source>
        <dbReference type="UniProtKB" id="P12530"/>
    </source>
</evidence>
<evidence type="ECO:0000250" key="3">
    <source>
        <dbReference type="UniProtKB" id="P16050"/>
    </source>
</evidence>
<evidence type="ECO:0000250" key="4">
    <source>
        <dbReference type="UniProtKB" id="P16469"/>
    </source>
</evidence>
<evidence type="ECO:0000250" key="5">
    <source>
        <dbReference type="UniProtKB" id="Q02759"/>
    </source>
</evidence>
<evidence type="ECO:0000255" key="6">
    <source>
        <dbReference type="PROSITE-ProRule" id="PRU00152"/>
    </source>
</evidence>
<evidence type="ECO:0000255" key="7">
    <source>
        <dbReference type="PROSITE-ProRule" id="PRU00726"/>
    </source>
</evidence>
<evidence type="ECO:0000269" key="8">
    <source>
    </source>
</evidence>
<evidence type="ECO:0000269" key="9">
    <source>
    </source>
</evidence>
<evidence type="ECO:0000269" key="10">
    <source>
    </source>
</evidence>
<evidence type="ECO:0000269" key="11">
    <source>
    </source>
</evidence>
<evidence type="ECO:0000269" key="12">
    <source>
    </source>
</evidence>
<evidence type="ECO:0000269" key="13">
    <source>
    </source>
</evidence>
<evidence type="ECO:0000269" key="14">
    <source>
    </source>
</evidence>
<evidence type="ECO:0000269" key="15">
    <source>
    </source>
</evidence>
<evidence type="ECO:0000303" key="16">
    <source>
    </source>
</evidence>
<evidence type="ECO:0000305" key="17"/>
<evidence type="ECO:0000305" key="18">
    <source>
    </source>
</evidence>
<evidence type="ECO:0000312" key="19">
    <source>
        <dbReference type="MGI" id="MGI:87997"/>
    </source>
</evidence>
<feature type="chain" id="PRO_0000220686" description="Polyunsaturated fatty acid lipoxygenase ALOX15">
    <location>
        <begin position="1"/>
        <end position="663"/>
    </location>
</feature>
<feature type="domain" description="PLAT" evidence="6">
    <location>
        <begin position="2"/>
        <end position="115"/>
    </location>
</feature>
<feature type="domain" description="Lipoxygenase" evidence="7">
    <location>
        <begin position="116"/>
        <end position="663"/>
    </location>
</feature>
<feature type="binding site" evidence="7">
    <location>
        <position position="361"/>
    </location>
    <ligand>
        <name>Fe cation</name>
        <dbReference type="ChEBI" id="CHEBI:24875"/>
        <note>catalytic</note>
    </ligand>
</feature>
<feature type="binding site" evidence="7">
    <location>
        <position position="366"/>
    </location>
    <ligand>
        <name>Fe cation</name>
        <dbReference type="ChEBI" id="CHEBI:24875"/>
        <note>catalytic</note>
    </ligand>
</feature>
<feature type="binding site" evidence="7">
    <location>
        <position position="541"/>
    </location>
    <ligand>
        <name>Fe cation</name>
        <dbReference type="ChEBI" id="CHEBI:24875"/>
        <note>catalytic</note>
    </ligand>
</feature>
<feature type="binding site" evidence="7">
    <location>
        <position position="545"/>
    </location>
    <ligand>
        <name>Fe cation</name>
        <dbReference type="ChEBI" id="CHEBI:24875"/>
        <note>catalytic</note>
    </ligand>
</feature>
<feature type="binding site" evidence="7">
    <location>
        <position position="663"/>
    </location>
    <ligand>
        <name>Fe cation</name>
        <dbReference type="ChEBI" id="CHEBI:24875"/>
        <note>catalytic</note>
    </ligand>
</feature>
<feature type="mutagenesis site" description="Abolishes arachidonate 15-lipoxygenase activity. Abolishes arachidonate 12-lipoxygenase activity. Abolishes linoleate 13-lipoxygenase activity." evidence="14">
    <location>
        <position position="663"/>
    </location>
</feature>
<feature type="sequence conflict" description="In Ref. 2; AAA64930." evidence="17" ref="2">
    <original>K</original>
    <variation>N</variation>
    <location>
        <position position="37"/>
    </location>
</feature>
<feature type="sequence conflict" description="In Ref. 2; AAA64930." evidence="17" ref="2">
    <original>E</original>
    <variation>Q</variation>
    <location>
        <position position="119"/>
    </location>
</feature>
<feature type="sequence conflict" description="In Ref. 2; AAA64930." evidence="17" ref="2">
    <original>T</original>
    <variation>N</variation>
    <location>
        <position position="397"/>
    </location>
</feature>
<feature type="sequence conflict" description="In Ref. 4; CAJ18471 and 6; AAH56625/AAH81546." evidence="17" ref="4 6">
    <original>K</original>
    <variation>T</variation>
    <location>
        <position position="568"/>
    </location>
</feature>
<proteinExistence type="evidence at protein level"/>
<dbReference type="EC" id="1.13.11.31" evidence="14"/>
<dbReference type="EC" id="1.13.11.33" evidence="14"/>
<dbReference type="EC" id="1.13.11.-" evidence="5"/>
<dbReference type="EC" id="1.13.11.12" evidence="14"/>
<dbReference type="EMBL" id="U04331">
    <property type="protein sequence ID" value="AAA20658.1"/>
    <property type="molecule type" value="mRNA"/>
</dbReference>
<dbReference type="EMBL" id="L34570">
    <property type="protein sequence ID" value="AAA64930.1"/>
    <property type="molecule type" value="mRNA"/>
</dbReference>
<dbReference type="EMBL" id="AK142371">
    <property type="protein sequence ID" value="BAE25045.1"/>
    <property type="molecule type" value="mRNA"/>
</dbReference>
<dbReference type="EMBL" id="CT010263">
    <property type="protein sequence ID" value="CAJ18471.1"/>
    <property type="molecule type" value="mRNA"/>
</dbReference>
<dbReference type="EMBL" id="AL596096">
    <property type="status" value="NOT_ANNOTATED_CDS"/>
    <property type="molecule type" value="Genomic_DNA"/>
</dbReference>
<dbReference type="EMBL" id="BC056625">
    <property type="protein sequence ID" value="AAH56625.1"/>
    <property type="molecule type" value="mRNA"/>
</dbReference>
<dbReference type="EMBL" id="BC081546">
    <property type="protein sequence ID" value="AAH81546.1"/>
    <property type="molecule type" value="mRNA"/>
</dbReference>
<dbReference type="CCDS" id="CCDS24944.1"/>
<dbReference type="PIR" id="B54075">
    <property type="entry name" value="B54075"/>
</dbReference>
<dbReference type="RefSeq" id="NP_033790.3">
    <property type="nucleotide sequence ID" value="NM_009660.3"/>
</dbReference>
<dbReference type="SMR" id="P39654"/>
<dbReference type="BioGRID" id="198074">
    <property type="interactions" value="2"/>
</dbReference>
<dbReference type="FunCoup" id="P39654">
    <property type="interactions" value="107"/>
</dbReference>
<dbReference type="IntAct" id="P39654">
    <property type="interactions" value="1"/>
</dbReference>
<dbReference type="STRING" id="10090.ENSMUSP00000019068"/>
<dbReference type="BindingDB" id="P39654"/>
<dbReference type="ChEMBL" id="CHEMBL3259476"/>
<dbReference type="DrugCentral" id="P39654"/>
<dbReference type="SwissLipids" id="SLP:000001638"/>
<dbReference type="PhosphoSitePlus" id="P39654"/>
<dbReference type="PaxDb" id="10090-ENSMUSP00000019068"/>
<dbReference type="ProteomicsDB" id="292351"/>
<dbReference type="Antibodypedia" id="2761">
    <property type="antibodies" value="361 antibodies from 32 providers"/>
</dbReference>
<dbReference type="DNASU" id="11687"/>
<dbReference type="Ensembl" id="ENSMUST00000019068.7">
    <property type="protein sequence ID" value="ENSMUSP00000019068.7"/>
    <property type="gene ID" value="ENSMUSG00000018924.7"/>
</dbReference>
<dbReference type="GeneID" id="11687"/>
<dbReference type="KEGG" id="mmu:11687"/>
<dbReference type="UCSC" id="uc007juo.1">
    <property type="organism name" value="mouse"/>
</dbReference>
<dbReference type="AGR" id="MGI:87997"/>
<dbReference type="CTD" id="246"/>
<dbReference type="MGI" id="MGI:87997">
    <property type="gene designation" value="Alox15"/>
</dbReference>
<dbReference type="VEuPathDB" id="HostDB:ENSMUSG00000018924"/>
<dbReference type="eggNOG" id="ENOG502QQSP">
    <property type="taxonomic scope" value="Eukaryota"/>
</dbReference>
<dbReference type="GeneTree" id="ENSGT00940000162807"/>
<dbReference type="HOGENOM" id="CLU_004282_3_3_1"/>
<dbReference type="InParanoid" id="P39654"/>
<dbReference type="OMA" id="SFCPPED"/>
<dbReference type="OrthoDB" id="407298at2759"/>
<dbReference type="PhylomeDB" id="P39654"/>
<dbReference type="TreeFam" id="TF105320"/>
<dbReference type="BRENDA" id="1.13.11.31">
    <property type="organism ID" value="3474"/>
</dbReference>
<dbReference type="BRENDA" id="1.13.11.33">
    <property type="organism ID" value="3474"/>
</dbReference>
<dbReference type="Reactome" id="R-MMU-2142691">
    <property type="pathway name" value="Synthesis of Leukotrienes (LT) and Eoxins (EX)"/>
</dbReference>
<dbReference type="Reactome" id="R-MMU-2142712">
    <property type="pathway name" value="Synthesis of 12-eicosatetraenoic acid derivatives"/>
</dbReference>
<dbReference type="Reactome" id="R-MMU-2142770">
    <property type="pathway name" value="Synthesis of 15-eicosatetraenoic acid derivatives"/>
</dbReference>
<dbReference type="Reactome" id="R-MMU-9018677">
    <property type="pathway name" value="Biosynthesis of DHA-derived SPMs"/>
</dbReference>
<dbReference type="Reactome" id="R-MMU-9018681">
    <property type="pathway name" value="Biosynthesis of protectins"/>
</dbReference>
<dbReference type="Reactome" id="R-MMU-9018896">
    <property type="pathway name" value="Biosynthesis of E-series 18(S)-resolvins"/>
</dbReference>
<dbReference type="Reactome" id="R-MMU-9023661">
    <property type="pathway name" value="Biosynthesis of E-series 18(R)-resolvins"/>
</dbReference>
<dbReference type="Reactome" id="R-MMU-9025106">
    <property type="pathway name" value="Biosynthesis of DPAn-6 SPMs"/>
</dbReference>
<dbReference type="Reactome" id="R-MMU-9026286">
    <property type="pathway name" value="Biosynthesis of DPAn-3-derived protectins and resolvins"/>
</dbReference>
<dbReference type="UniPathway" id="UPA00881"/>
<dbReference type="BioGRID-ORCS" id="11687">
    <property type="hits" value="2 hits in 80 CRISPR screens"/>
</dbReference>
<dbReference type="ChiTaRS" id="Alox15">
    <property type="organism name" value="mouse"/>
</dbReference>
<dbReference type="PRO" id="PR:P39654"/>
<dbReference type="Proteomes" id="UP000000589">
    <property type="component" value="Chromosome 11"/>
</dbReference>
<dbReference type="RNAct" id="P39654">
    <property type="molecule type" value="protein"/>
</dbReference>
<dbReference type="Bgee" id="ENSMUSG00000018924">
    <property type="expression patterns" value="Expressed in olfactory system and 54 other cell types or tissues"/>
</dbReference>
<dbReference type="ExpressionAtlas" id="P39654">
    <property type="expression patterns" value="baseline and differential"/>
</dbReference>
<dbReference type="GO" id="GO:0005737">
    <property type="term" value="C:cytoplasm"/>
    <property type="evidence" value="ECO:0000314"/>
    <property type="project" value="MGI"/>
</dbReference>
<dbReference type="GO" id="GO:0009898">
    <property type="term" value="C:cytoplasmic side of plasma membrane"/>
    <property type="evidence" value="ECO:0000250"/>
    <property type="project" value="UniProtKB"/>
</dbReference>
<dbReference type="GO" id="GO:0005829">
    <property type="term" value="C:cytosol"/>
    <property type="evidence" value="ECO:0000314"/>
    <property type="project" value="UniProtKB"/>
</dbReference>
<dbReference type="GO" id="GO:0005811">
    <property type="term" value="C:lipid droplet"/>
    <property type="evidence" value="ECO:0000250"/>
    <property type="project" value="UniProtKB"/>
</dbReference>
<dbReference type="GO" id="GO:0016020">
    <property type="term" value="C:membrane"/>
    <property type="evidence" value="ECO:0000250"/>
    <property type="project" value="UniProtKB"/>
</dbReference>
<dbReference type="GO" id="GO:0005886">
    <property type="term" value="C:plasma membrane"/>
    <property type="evidence" value="ECO:0000314"/>
    <property type="project" value="UniProtKB"/>
</dbReference>
<dbReference type="GO" id="GO:0004052">
    <property type="term" value="F:arachidonate 12(S)-lipoxygenase activity"/>
    <property type="evidence" value="ECO:0000314"/>
    <property type="project" value="UniProtKB"/>
</dbReference>
<dbReference type="GO" id="GO:0050473">
    <property type="term" value="F:arachidonate 15-lipoxygenase activity"/>
    <property type="evidence" value="ECO:0000314"/>
    <property type="project" value="UniProtKB"/>
</dbReference>
<dbReference type="GO" id="GO:0005506">
    <property type="term" value="F:iron ion binding"/>
    <property type="evidence" value="ECO:0000250"/>
    <property type="project" value="UniProtKB"/>
</dbReference>
<dbReference type="GO" id="GO:0016165">
    <property type="term" value="F:linoleate 13S-lipoxygenase activity"/>
    <property type="evidence" value="ECO:0000250"/>
    <property type="project" value="UniProtKB"/>
</dbReference>
<dbReference type="GO" id="GO:0005546">
    <property type="term" value="F:phosphatidylinositol-4,5-bisphosphate binding"/>
    <property type="evidence" value="ECO:0000250"/>
    <property type="project" value="UniProtKB"/>
</dbReference>
<dbReference type="GO" id="GO:0043277">
    <property type="term" value="P:apoptotic cell clearance"/>
    <property type="evidence" value="ECO:0000315"/>
    <property type="project" value="UniProtKB"/>
</dbReference>
<dbReference type="GO" id="GO:0019369">
    <property type="term" value="P:arachidonate metabolic process"/>
    <property type="evidence" value="ECO:0000314"/>
    <property type="project" value="UniProtKB"/>
</dbReference>
<dbReference type="GO" id="GO:0030282">
    <property type="term" value="P:bone mineralization"/>
    <property type="evidence" value="ECO:0000315"/>
    <property type="project" value="MGI"/>
</dbReference>
<dbReference type="GO" id="GO:0071277">
    <property type="term" value="P:cellular response to calcium ion"/>
    <property type="evidence" value="ECO:0000250"/>
    <property type="project" value="UniProtKB"/>
</dbReference>
<dbReference type="GO" id="GO:0035963">
    <property type="term" value="P:cellular response to interleukin-13"/>
    <property type="evidence" value="ECO:0000250"/>
    <property type="project" value="UniProtKB"/>
</dbReference>
<dbReference type="GO" id="GO:0019395">
    <property type="term" value="P:fatty acid oxidation"/>
    <property type="evidence" value="ECO:0000250"/>
    <property type="project" value="UniProtKB"/>
</dbReference>
<dbReference type="GO" id="GO:0051122">
    <property type="term" value="P:hepoxilin biosynthetic process"/>
    <property type="evidence" value="ECO:0000250"/>
    <property type="project" value="UniProtKB"/>
</dbReference>
<dbReference type="GO" id="GO:0043651">
    <property type="term" value="P:linoleic acid metabolic process"/>
    <property type="evidence" value="ECO:0000250"/>
    <property type="project" value="UniProtKB"/>
</dbReference>
<dbReference type="GO" id="GO:2001303">
    <property type="term" value="P:lipoxin A4 biosynthetic process"/>
    <property type="evidence" value="ECO:0000315"/>
    <property type="project" value="UniProtKB"/>
</dbReference>
<dbReference type="GO" id="GO:0019372">
    <property type="term" value="P:lipoxygenase pathway"/>
    <property type="evidence" value="ECO:0000314"/>
    <property type="project" value="UniProtKB"/>
</dbReference>
<dbReference type="GO" id="GO:0002820">
    <property type="term" value="P:negative regulation of adaptive immune response"/>
    <property type="evidence" value="ECO:0000315"/>
    <property type="project" value="UniProtKB"/>
</dbReference>
<dbReference type="GO" id="GO:0001503">
    <property type="term" value="P:ossification"/>
    <property type="evidence" value="ECO:0000315"/>
    <property type="project" value="MGI"/>
</dbReference>
<dbReference type="GO" id="GO:0006646">
    <property type="term" value="P:phosphatidylethanolamine biosynthetic process"/>
    <property type="evidence" value="ECO:0000315"/>
    <property type="project" value="UniProtKB"/>
</dbReference>
<dbReference type="GO" id="GO:0030838">
    <property type="term" value="P:positive regulation of actin filament polymerization"/>
    <property type="evidence" value="ECO:0000315"/>
    <property type="project" value="UniProtKB"/>
</dbReference>
<dbReference type="GO" id="GO:0010811">
    <property type="term" value="P:positive regulation of cell-substrate adhesion"/>
    <property type="evidence" value="ECO:0000250"/>
    <property type="project" value="UniProtKB"/>
</dbReference>
<dbReference type="GO" id="GO:0070374">
    <property type="term" value="P:positive regulation of ERK1 and ERK2 cascade"/>
    <property type="evidence" value="ECO:0000250"/>
    <property type="project" value="UniProtKB"/>
</dbReference>
<dbReference type="GO" id="GO:1901074">
    <property type="term" value="P:regulation of engulfment of apoptotic cell"/>
    <property type="evidence" value="ECO:0000315"/>
    <property type="project" value="UniProtKB"/>
</dbReference>
<dbReference type="GO" id="GO:0050727">
    <property type="term" value="P:regulation of inflammatory response"/>
    <property type="evidence" value="ECO:0000250"/>
    <property type="project" value="UniProtKB"/>
</dbReference>
<dbReference type="GO" id="GO:0035358">
    <property type="term" value="P:regulation of peroxisome proliferator activated receptor signaling pathway"/>
    <property type="evidence" value="ECO:0000315"/>
    <property type="project" value="UniProtKB"/>
</dbReference>
<dbReference type="GO" id="GO:0034976">
    <property type="term" value="P:response to endoplasmic reticulum stress"/>
    <property type="evidence" value="ECO:0000315"/>
    <property type="project" value="UniProtKB"/>
</dbReference>
<dbReference type="GO" id="GO:0042060">
    <property type="term" value="P:wound healing"/>
    <property type="evidence" value="ECO:0000315"/>
    <property type="project" value="UniProtKB"/>
</dbReference>
<dbReference type="CDD" id="cd01753">
    <property type="entry name" value="PLAT_LOX"/>
    <property type="match status" value="1"/>
</dbReference>
<dbReference type="FunFam" id="3.10.450.60:FF:000004">
    <property type="entry name" value="Arachidonate 12-lipoxygenase, 12S-type"/>
    <property type="match status" value="1"/>
</dbReference>
<dbReference type="FunFam" id="1.20.245.10:FF:000001">
    <property type="entry name" value="Arachidonate 5-lipoxygenase a"/>
    <property type="match status" value="1"/>
</dbReference>
<dbReference type="FunFam" id="2.60.60.20:FF:000002">
    <property type="entry name" value="Arachidonate 5-lipoxygenase a"/>
    <property type="match status" value="1"/>
</dbReference>
<dbReference type="Gene3D" id="3.10.450.60">
    <property type="match status" value="1"/>
</dbReference>
<dbReference type="Gene3D" id="1.20.245.10">
    <property type="entry name" value="Lipoxygenase-1, Domain 5"/>
    <property type="match status" value="1"/>
</dbReference>
<dbReference type="Gene3D" id="2.60.60.20">
    <property type="entry name" value="PLAT/LH2 domain"/>
    <property type="match status" value="1"/>
</dbReference>
<dbReference type="InterPro" id="IPR000907">
    <property type="entry name" value="LipOase"/>
</dbReference>
<dbReference type="InterPro" id="IPR013819">
    <property type="entry name" value="LipOase_C"/>
</dbReference>
<dbReference type="InterPro" id="IPR036226">
    <property type="entry name" value="LipOase_C_sf"/>
</dbReference>
<dbReference type="InterPro" id="IPR020834">
    <property type="entry name" value="LipOase_CS"/>
</dbReference>
<dbReference type="InterPro" id="IPR020833">
    <property type="entry name" value="LipOase_Fe_BS"/>
</dbReference>
<dbReference type="InterPro" id="IPR001885">
    <property type="entry name" value="LipOase_mml"/>
</dbReference>
<dbReference type="InterPro" id="IPR001024">
    <property type="entry name" value="PLAT/LH2_dom"/>
</dbReference>
<dbReference type="InterPro" id="IPR036392">
    <property type="entry name" value="PLAT/LH2_dom_sf"/>
</dbReference>
<dbReference type="InterPro" id="IPR042062">
    <property type="entry name" value="PLAT_LOX_verte"/>
</dbReference>
<dbReference type="PANTHER" id="PTHR11771">
    <property type="entry name" value="LIPOXYGENASE"/>
    <property type="match status" value="1"/>
</dbReference>
<dbReference type="Pfam" id="PF00305">
    <property type="entry name" value="Lipoxygenase"/>
    <property type="match status" value="1"/>
</dbReference>
<dbReference type="Pfam" id="PF01477">
    <property type="entry name" value="PLAT"/>
    <property type="match status" value="1"/>
</dbReference>
<dbReference type="PRINTS" id="PR00087">
    <property type="entry name" value="LIPOXYGENASE"/>
</dbReference>
<dbReference type="PRINTS" id="PR00467">
    <property type="entry name" value="MAMLPOXGNASE"/>
</dbReference>
<dbReference type="SMART" id="SM00308">
    <property type="entry name" value="LH2"/>
    <property type="match status" value="1"/>
</dbReference>
<dbReference type="SUPFAM" id="SSF49723">
    <property type="entry name" value="Lipase/lipooxygenase domain (PLAT/LH2 domain)"/>
    <property type="match status" value="1"/>
</dbReference>
<dbReference type="SUPFAM" id="SSF48484">
    <property type="entry name" value="Lipoxigenase"/>
    <property type="match status" value="1"/>
</dbReference>
<dbReference type="PROSITE" id="PS00711">
    <property type="entry name" value="LIPOXYGENASE_1"/>
    <property type="match status" value="1"/>
</dbReference>
<dbReference type="PROSITE" id="PS00081">
    <property type="entry name" value="LIPOXYGENASE_2"/>
    <property type="match status" value="1"/>
</dbReference>
<dbReference type="PROSITE" id="PS51393">
    <property type="entry name" value="LIPOXYGENASE_3"/>
    <property type="match status" value="1"/>
</dbReference>
<dbReference type="PROSITE" id="PS50095">
    <property type="entry name" value="PLAT"/>
    <property type="match status" value="1"/>
</dbReference>